<dbReference type="EMBL" id="CT573213">
    <property type="protein sequence ID" value="CAJ64560.1"/>
    <property type="molecule type" value="Genomic_DNA"/>
</dbReference>
<dbReference type="RefSeq" id="WP_011606995.1">
    <property type="nucleotide sequence ID" value="NC_008278.1"/>
</dbReference>
<dbReference type="SMR" id="Q0RDB0"/>
<dbReference type="STRING" id="326424.FRAAL5935"/>
<dbReference type="KEGG" id="fal:FRAAL5935"/>
<dbReference type="eggNOG" id="COG0711">
    <property type="taxonomic scope" value="Bacteria"/>
</dbReference>
<dbReference type="HOGENOM" id="CLU_079215_5_1_11"/>
<dbReference type="OrthoDB" id="5243563at2"/>
<dbReference type="Proteomes" id="UP000000657">
    <property type="component" value="Chromosome"/>
</dbReference>
<dbReference type="GO" id="GO:0005886">
    <property type="term" value="C:plasma membrane"/>
    <property type="evidence" value="ECO:0007669"/>
    <property type="project" value="UniProtKB-SubCell"/>
</dbReference>
<dbReference type="GO" id="GO:0045259">
    <property type="term" value="C:proton-transporting ATP synthase complex"/>
    <property type="evidence" value="ECO:0007669"/>
    <property type="project" value="UniProtKB-KW"/>
</dbReference>
<dbReference type="GO" id="GO:0046933">
    <property type="term" value="F:proton-transporting ATP synthase activity, rotational mechanism"/>
    <property type="evidence" value="ECO:0007669"/>
    <property type="project" value="UniProtKB-UniRule"/>
</dbReference>
<dbReference type="GO" id="GO:0046961">
    <property type="term" value="F:proton-transporting ATPase activity, rotational mechanism"/>
    <property type="evidence" value="ECO:0007669"/>
    <property type="project" value="TreeGrafter"/>
</dbReference>
<dbReference type="CDD" id="cd06503">
    <property type="entry name" value="ATP-synt_Fo_b"/>
    <property type="match status" value="1"/>
</dbReference>
<dbReference type="Gene3D" id="1.20.5.620">
    <property type="entry name" value="F1F0 ATP synthase subunit B, membrane domain"/>
    <property type="match status" value="1"/>
</dbReference>
<dbReference type="HAMAP" id="MF_01398">
    <property type="entry name" value="ATP_synth_b_bprime"/>
    <property type="match status" value="1"/>
</dbReference>
<dbReference type="InterPro" id="IPR028987">
    <property type="entry name" value="ATP_synth_B-like_membr_sf"/>
</dbReference>
<dbReference type="InterPro" id="IPR002146">
    <property type="entry name" value="ATP_synth_b/b'su_bac/chlpt"/>
</dbReference>
<dbReference type="InterPro" id="IPR005864">
    <property type="entry name" value="ATP_synth_F0_bsu_bac"/>
</dbReference>
<dbReference type="InterPro" id="IPR050059">
    <property type="entry name" value="ATP_synthase_B_chain"/>
</dbReference>
<dbReference type="NCBIfam" id="TIGR01144">
    <property type="entry name" value="ATP_synt_b"/>
    <property type="match status" value="1"/>
</dbReference>
<dbReference type="NCBIfam" id="NF004412">
    <property type="entry name" value="PRK05759.1-3"/>
    <property type="match status" value="1"/>
</dbReference>
<dbReference type="PANTHER" id="PTHR33445:SF1">
    <property type="entry name" value="ATP SYNTHASE SUBUNIT B"/>
    <property type="match status" value="1"/>
</dbReference>
<dbReference type="PANTHER" id="PTHR33445">
    <property type="entry name" value="ATP SYNTHASE SUBUNIT B', CHLOROPLASTIC"/>
    <property type="match status" value="1"/>
</dbReference>
<dbReference type="Pfam" id="PF00430">
    <property type="entry name" value="ATP-synt_B"/>
    <property type="match status" value="1"/>
</dbReference>
<dbReference type="SUPFAM" id="SSF81573">
    <property type="entry name" value="F1F0 ATP synthase subunit B, membrane domain"/>
    <property type="match status" value="1"/>
</dbReference>
<name>ATPF_FRAAA</name>
<keyword id="KW-0066">ATP synthesis</keyword>
<keyword id="KW-1003">Cell membrane</keyword>
<keyword id="KW-0138">CF(0)</keyword>
<keyword id="KW-0375">Hydrogen ion transport</keyword>
<keyword id="KW-0406">Ion transport</keyword>
<keyword id="KW-0472">Membrane</keyword>
<keyword id="KW-1185">Reference proteome</keyword>
<keyword id="KW-0812">Transmembrane</keyword>
<keyword id="KW-1133">Transmembrane helix</keyword>
<keyword id="KW-0813">Transport</keyword>
<organism>
    <name type="scientific">Frankia alni (strain DSM 45986 / CECT 9034 / ACN14a)</name>
    <dbReference type="NCBI Taxonomy" id="326424"/>
    <lineage>
        <taxon>Bacteria</taxon>
        <taxon>Bacillati</taxon>
        <taxon>Actinomycetota</taxon>
        <taxon>Actinomycetes</taxon>
        <taxon>Frankiales</taxon>
        <taxon>Frankiaceae</taxon>
        <taxon>Frankia</taxon>
    </lineage>
</organism>
<reference key="1">
    <citation type="journal article" date="2007" name="Genome Res.">
        <title>Genome characteristics of facultatively symbiotic Frankia sp. strains reflect host range and host plant biogeography.</title>
        <authorList>
            <person name="Normand P."/>
            <person name="Lapierre P."/>
            <person name="Tisa L.S."/>
            <person name="Gogarten J.P."/>
            <person name="Alloisio N."/>
            <person name="Bagnarol E."/>
            <person name="Bassi C.A."/>
            <person name="Berry A.M."/>
            <person name="Bickhart D.M."/>
            <person name="Choisne N."/>
            <person name="Couloux A."/>
            <person name="Cournoyer B."/>
            <person name="Cruveiller S."/>
            <person name="Daubin V."/>
            <person name="Demange N."/>
            <person name="Francino M.P."/>
            <person name="Goltsman E."/>
            <person name="Huang Y."/>
            <person name="Kopp O.R."/>
            <person name="Labarre L."/>
            <person name="Lapidus A."/>
            <person name="Lavire C."/>
            <person name="Marechal J."/>
            <person name="Martinez M."/>
            <person name="Mastronunzio J.E."/>
            <person name="Mullin B.C."/>
            <person name="Niemann J."/>
            <person name="Pujic P."/>
            <person name="Rawnsley T."/>
            <person name="Rouy Z."/>
            <person name="Schenowitz C."/>
            <person name="Sellstedt A."/>
            <person name="Tavares F."/>
            <person name="Tomkins J.P."/>
            <person name="Vallenet D."/>
            <person name="Valverde C."/>
            <person name="Wall L.G."/>
            <person name="Wang Y."/>
            <person name="Medigue C."/>
            <person name="Benson D.R."/>
        </authorList>
    </citation>
    <scope>NUCLEOTIDE SEQUENCE [LARGE SCALE GENOMIC DNA]</scope>
    <source>
        <strain>DSM 45986 / CECT 9034 / ACN14a</strain>
    </source>
</reference>
<feature type="chain" id="PRO_0000368496" description="ATP synthase subunit b">
    <location>
        <begin position="1"/>
        <end position="198"/>
    </location>
</feature>
<feature type="transmembrane region" description="Helical" evidence="1">
    <location>
        <begin position="25"/>
        <end position="45"/>
    </location>
</feature>
<protein>
    <recommendedName>
        <fullName evidence="1">ATP synthase subunit b</fullName>
    </recommendedName>
    <alternativeName>
        <fullName evidence="1">ATP synthase F(0) sector subunit b</fullName>
    </alternativeName>
    <alternativeName>
        <fullName evidence="1">ATPase subunit I</fullName>
    </alternativeName>
    <alternativeName>
        <fullName evidence="1">F-type ATPase subunit b</fullName>
        <shortName evidence="1">F-ATPase subunit b</shortName>
    </alternativeName>
</protein>
<evidence type="ECO:0000255" key="1">
    <source>
        <dbReference type="HAMAP-Rule" id="MF_01398"/>
    </source>
</evidence>
<gene>
    <name evidence="1" type="primary">atpF</name>
    <name type="ordered locus">FRAAL5935</name>
</gene>
<sequence length="198" mass="21179">MSASAAILLAASESGHSDENVLIPPLSELLIGTLAFGLLVAFFFWKIRPQIARTYAQRTERIEGGIARAEAAQREAQALLEQYRAQLTEARAEAARIRDDAHTEGRQIVEELRASAQREIAEIKERADAQLAADRAQIVAQVRREVGVIAIDLASKIVGYQVESTATQARLVDDFIAALDNSAEGAGSSTPAPVGSGG</sequence>
<accession>Q0RDB0</accession>
<comment type="function">
    <text evidence="1">F(1)F(0) ATP synthase produces ATP from ADP in the presence of a proton or sodium gradient. F-type ATPases consist of two structural domains, F(1) containing the extramembraneous catalytic core and F(0) containing the membrane proton channel, linked together by a central stalk and a peripheral stalk. During catalysis, ATP synthesis in the catalytic domain of F(1) is coupled via a rotary mechanism of the central stalk subunits to proton translocation.</text>
</comment>
<comment type="function">
    <text evidence="1">Component of the F(0) channel, it forms part of the peripheral stalk, linking F(1) to F(0).</text>
</comment>
<comment type="subunit">
    <text evidence="1">F-type ATPases have 2 components, F(1) - the catalytic core - and F(0) - the membrane proton channel. F(1) has five subunits: alpha(3), beta(3), gamma(1), delta(1), epsilon(1). F(0) has three main subunits: a(1), b(2) and c(10-14). The alpha and beta chains form an alternating ring which encloses part of the gamma chain. F(1) is attached to F(0) by a central stalk formed by the gamma and epsilon chains, while a peripheral stalk is formed by the delta and b chains.</text>
</comment>
<comment type="subcellular location">
    <subcellularLocation>
        <location evidence="1">Cell membrane</location>
        <topology evidence="1">Single-pass membrane protein</topology>
    </subcellularLocation>
</comment>
<comment type="similarity">
    <text evidence="1">Belongs to the ATPase B chain family.</text>
</comment>
<proteinExistence type="inferred from homology"/>